<dbReference type="EC" id="2.7.7.6" evidence="1"/>
<dbReference type="EMBL" id="M76567">
    <property type="protein sequence ID" value="AAA73100.1"/>
    <property type="molecule type" value="Genomic_DNA"/>
</dbReference>
<dbReference type="EMBL" id="AY596297">
    <property type="protein sequence ID" value="AAV45148.1"/>
    <property type="molecule type" value="Genomic_DNA"/>
</dbReference>
<dbReference type="PIR" id="E41715">
    <property type="entry name" value="E41715"/>
</dbReference>
<dbReference type="RefSeq" id="WP_004516796.1">
    <property type="nucleotide sequence ID" value="NZ_CP039138.1"/>
</dbReference>
<dbReference type="SMR" id="P29200"/>
<dbReference type="STRING" id="272569.rrnAC0068"/>
<dbReference type="PaxDb" id="272569-rrnAC0068"/>
<dbReference type="EnsemblBacteria" id="AAV45148">
    <property type="protein sequence ID" value="AAV45148"/>
    <property type="gene ID" value="rrnAC0068"/>
</dbReference>
<dbReference type="KEGG" id="hma:rrnAC0068"/>
<dbReference type="PATRIC" id="fig|272569.17.peg.876"/>
<dbReference type="eggNOG" id="arCOG01268">
    <property type="taxonomic scope" value="Archaea"/>
</dbReference>
<dbReference type="HOGENOM" id="CLU_112527_5_0_2"/>
<dbReference type="Proteomes" id="UP000001169">
    <property type="component" value="Chromosome I"/>
</dbReference>
<dbReference type="GO" id="GO:0005737">
    <property type="term" value="C:cytoplasm"/>
    <property type="evidence" value="ECO:0007669"/>
    <property type="project" value="UniProtKB-SubCell"/>
</dbReference>
<dbReference type="GO" id="GO:0000428">
    <property type="term" value="C:DNA-directed RNA polymerase complex"/>
    <property type="evidence" value="ECO:0007669"/>
    <property type="project" value="UniProtKB-KW"/>
</dbReference>
<dbReference type="GO" id="GO:0003677">
    <property type="term" value="F:DNA binding"/>
    <property type="evidence" value="ECO:0007669"/>
    <property type="project" value="UniProtKB-UniRule"/>
</dbReference>
<dbReference type="GO" id="GO:0003899">
    <property type="term" value="F:DNA-directed RNA polymerase activity"/>
    <property type="evidence" value="ECO:0007669"/>
    <property type="project" value="UniProtKB-UniRule"/>
</dbReference>
<dbReference type="GO" id="GO:0006360">
    <property type="term" value="P:transcription by RNA polymerase I"/>
    <property type="evidence" value="ECO:0007669"/>
    <property type="project" value="TreeGrafter"/>
</dbReference>
<dbReference type="GO" id="GO:0006366">
    <property type="term" value="P:transcription by RNA polymerase II"/>
    <property type="evidence" value="ECO:0007669"/>
    <property type="project" value="TreeGrafter"/>
</dbReference>
<dbReference type="GO" id="GO:0042797">
    <property type="term" value="P:tRNA transcription by RNA polymerase III"/>
    <property type="evidence" value="ECO:0007669"/>
    <property type="project" value="TreeGrafter"/>
</dbReference>
<dbReference type="Gene3D" id="3.90.940.10">
    <property type="match status" value="1"/>
</dbReference>
<dbReference type="HAMAP" id="MF_00192">
    <property type="entry name" value="RNApol_arch_Rpo6"/>
    <property type="match status" value="1"/>
</dbReference>
<dbReference type="InterPro" id="IPR020708">
    <property type="entry name" value="DNA-dir_RNA_polK_14-18kDa_CS"/>
</dbReference>
<dbReference type="InterPro" id="IPR006110">
    <property type="entry name" value="Pol_omega/Rpo6/RPB6"/>
</dbReference>
<dbReference type="InterPro" id="IPR036161">
    <property type="entry name" value="RPB6/omega-like_sf"/>
</dbReference>
<dbReference type="InterPro" id="IPR006111">
    <property type="entry name" value="Rpo6/Rpb6"/>
</dbReference>
<dbReference type="NCBIfam" id="NF002208">
    <property type="entry name" value="PRK01099.1-3"/>
    <property type="match status" value="1"/>
</dbReference>
<dbReference type="PANTHER" id="PTHR47227">
    <property type="entry name" value="DNA-DIRECTED RNA POLYMERASE SUBUNIT K"/>
    <property type="match status" value="1"/>
</dbReference>
<dbReference type="PANTHER" id="PTHR47227:SF5">
    <property type="entry name" value="DNA-DIRECTED RNA POLYMERASES I, II, AND III SUBUNIT RPABC2"/>
    <property type="match status" value="1"/>
</dbReference>
<dbReference type="Pfam" id="PF01192">
    <property type="entry name" value="RNA_pol_Rpb6"/>
    <property type="match status" value="1"/>
</dbReference>
<dbReference type="PIRSF" id="PIRSF000778">
    <property type="entry name" value="RpoK/RPB6"/>
    <property type="match status" value="1"/>
</dbReference>
<dbReference type="SUPFAM" id="SSF63562">
    <property type="entry name" value="RPB6/omega subunit-like"/>
    <property type="match status" value="1"/>
</dbReference>
<dbReference type="PROSITE" id="PS01111">
    <property type="entry name" value="RNA_POL_K_14KD"/>
    <property type="match status" value="1"/>
</dbReference>
<reference key="1">
    <citation type="journal article" date="1991" name="J. Biol. Chem.">
        <title>Halobacterial S9 operon. Three ribosomal protein genes are cotranscribed with genes encoding a tRNA(Leu), the enolase, and a putative membrane protein in the archaebacterium Haloarcula (Halobacterium) marismortui.</title>
        <authorList>
            <person name="Kroemer W.J."/>
            <person name="Arndt E."/>
        </authorList>
    </citation>
    <scope>NUCLEOTIDE SEQUENCE [GENOMIC DNA]</scope>
</reference>
<reference key="2">
    <citation type="journal article" date="2004" name="Genome Res.">
        <title>Genome sequence of Haloarcula marismortui: a halophilic archaeon from the Dead Sea.</title>
        <authorList>
            <person name="Baliga N.S."/>
            <person name="Bonneau R."/>
            <person name="Facciotti M.T."/>
            <person name="Pan M."/>
            <person name="Glusman G."/>
            <person name="Deutsch E.W."/>
            <person name="Shannon P."/>
            <person name="Chiu Y."/>
            <person name="Weng R.S."/>
            <person name="Gan R.R."/>
            <person name="Hung P."/>
            <person name="Date S.V."/>
            <person name="Marcotte E."/>
            <person name="Hood L."/>
            <person name="Ng W.V."/>
        </authorList>
    </citation>
    <scope>NUCLEOTIDE SEQUENCE [LARGE SCALE GENOMIC DNA]</scope>
    <source>
        <strain>ATCC 43049 / DSM 3752 / JCM 8966 / VKM B-1809</strain>
    </source>
</reference>
<reference key="3">
    <citation type="journal article" date="1994" name="J. Bacteriol.">
        <title>Halobacterial S9 operon contains two genes encoding proteins homologous to subunits shared by eukaryotic RNA polymerases I, II, and III.</title>
        <authorList>
            <person name="McKune K."/>
            <person name="Woychik N.A."/>
        </authorList>
    </citation>
    <scope>SIMILARITY</scope>
</reference>
<comment type="function">
    <text evidence="1">DNA-dependent RNA polymerase (RNAP) catalyzes the transcription of DNA into RNA using the four ribonucleoside triphosphates as substrates.</text>
</comment>
<comment type="catalytic activity">
    <reaction evidence="1">
        <text>RNA(n) + a ribonucleoside 5'-triphosphate = RNA(n+1) + diphosphate</text>
        <dbReference type="Rhea" id="RHEA:21248"/>
        <dbReference type="Rhea" id="RHEA-COMP:14527"/>
        <dbReference type="Rhea" id="RHEA-COMP:17342"/>
        <dbReference type="ChEBI" id="CHEBI:33019"/>
        <dbReference type="ChEBI" id="CHEBI:61557"/>
        <dbReference type="ChEBI" id="CHEBI:140395"/>
        <dbReference type="EC" id="2.7.7.6"/>
    </reaction>
</comment>
<comment type="subunit">
    <text evidence="1">Part of the RNA polymerase complex.</text>
</comment>
<comment type="subcellular location">
    <subcellularLocation>
        <location evidence="1">Cytoplasm</location>
    </subcellularLocation>
</comment>
<comment type="similarity">
    <text evidence="1 2">Belongs to the archaeal Rpo6/eukaryotic RPB6 RNA polymerase subunit family.</text>
</comment>
<organism>
    <name type="scientific">Haloarcula marismortui (strain ATCC 43049 / DSM 3752 / JCM 8966 / VKM B-1809)</name>
    <name type="common">Halobacterium marismortui</name>
    <dbReference type="NCBI Taxonomy" id="272569"/>
    <lineage>
        <taxon>Archaea</taxon>
        <taxon>Methanobacteriati</taxon>
        <taxon>Methanobacteriota</taxon>
        <taxon>Stenosarchaea group</taxon>
        <taxon>Halobacteria</taxon>
        <taxon>Halobacteriales</taxon>
        <taxon>Haloarculaceae</taxon>
        <taxon>Haloarcula</taxon>
    </lineage>
</organism>
<proteinExistence type="inferred from homology"/>
<feature type="chain" id="PRO_0000133810" description="DNA-directed RNA polymerase subunit Rpo6">
    <location>
        <begin position="1"/>
        <end position="57"/>
    </location>
</feature>
<evidence type="ECO:0000255" key="1">
    <source>
        <dbReference type="HAMAP-Rule" id="MF_00192"/>
    </source>
</evidence>
<evidence type="ECO:0000305" key="2">
    <source>
    </source>
</evidence>
<keyword id="KW-0963">Cytoplasm</keyword>
<keyword id="KW-0240">DNA-directed RNA polymerase</keyword>
<keyword id="KW-0548">Nucleotidyltransferase</keyword>
<keyword id="KW-1185">Reference proteome</keyword>
<keyword id="KW-0804">Transcription</keyword>
<keyword id="KW-0808">Transferase</keyword>
<protein>
    <recommendedName>
        <fullName evidence="1">DNA-directed RNA polymerase subunit Rpo6</fullName>
        <ecNumber evidence="1">2.7.7.6</ecNumber>
    </recommendedName>
    <alternativeName>
        <fullName evidence="1">DNA-directed RNA polymerase subunit K</fullName>
    </alternativeName>
</protein>
<sequence>MNAQESRYEKARKLGARALQLAHGAPVLIETEHTQPILIAAEEYDAGVLPFTVNRSD</sequence>
<name>RPO6_HALMA</name>
<gene>
    <name evidence="1" type="primary">rpo6</name>
    <name evidence="1" type="synonym">rpoK</name>
    <name type="ordered locus">rrnAC0068</name>
</gene>
<accession>P29200</accession>
<accession>Q5V5Q4</accession>